<sequence length="201" mass="22824">MSCLFVISAPSGAGKTSVIRTLLQTDINLTLSISYTTRPPRRDEKNGHDYFFVDHATFKDMQARGEFLESAEVHGNLYGTSRKWIEETMAAEQDVLLEIDCQGAQQIRTVYPQAASIFILPPSMEALKQRLEQRGQDENKVIERRLAAARSEISHVNRFDYVVVNHELETAARDVASIVQAERLKTIRQLVRQRSLIAEFS</sequence>
<gene>
    <name evidence="1" type="primary">gmk</name>
    <name type="ordered locus">NE2254</name>
</gene>
<feature type="chain" id="PRO_0000170574" description="Guanylate kinase">
    <location>
        <begin position="1"/>
        <end position="201"/>
    </location>
</feature>
<feature type="domain" description="Guanylate kinase-like" evidence="1">
    <location>
        <begin position="2"/>
        <end position="180"/>
    </location>
</feature>
<feature type="binding site" evidence="1">
    <location>
        <begin position="9"/>
        <end position="16"/>
    </location>
    <ligand>
        <name>ATP</name>
        <dbReference type="ChEBI" id="CHEBI:30616"/>
    </ligand>
</feature>
<dbReference type="EC" id="2.7.4.8" evidence="1"/>
<dbReference type="EMBL" id="AL954747">
    <property type="protein sequence ID" value="CAD86166.1"/>
    <property type="molecule type" value="Genomic_DNA"/>
</dbReference>
<dbReference type="RefSeq" id="WP_011112745.1">
    <property type="nucleotide sequence ID" value="NC_004757.1"/>
</dbReference>
<dbReference type="SMR" id="Q82SQ3"/>
<dbReference type="STRING" id="228410.NE2254"/>
<dbReference type="GeneID" id="87105390"/>
<dbReference type="KEGG" id="neu:NE2254"/>
<dbReference type="eggNOG" id="COG0194">
    <property type="taxonomic scope" value="Bacteria"/>
</dbReference>
<dbReference type="HOGENOM" id="CLU_001715_1_2_4"/>
<dbReference type="OrthoDB" id="9808150at2"/>
<dbReference type="PhylomeDB" id="Q82SQ3"/>
<dbReference type="Proteomes" id="UP000001416">
    <property type="component" value="Chromosome"/>
</dbReference>
<dbReference type="GO" id="GO:0005829">
    <property type="term" value="C:cytosol"/>
    <property type="evidence" value="ECO:0007669"/>
    <property type="project" value="TreeGrafter"/>
</dbReference>
<dbReference type="GO" id="GO:0005524">
    <property type="term" value="F:ATP binding"/>
    <property type="evidence" value="ECO:0007669"/>
    <property type="project" value="UniProtKB-UniRule"/>
</dbReference>
<dbReference type="GO" id="GO:0004385">
    <property type="term" value="F:guanylate kinase activity"/>
    <property type="evidence" value="ECO:0007669"/>
    <property type="project" value="UniProtKB-UniRule"/>
</dbReference>
<dbReference type="CDD" id="cd00071">
    <property type="entry name" value="GMPK"/>
    <property type="match status" value="1"/>
</dbReference>
<dbReference type="FunFam" id="3.30.63.10:FF:000002">
    <property type="entry name" value="Guanylate kinase 1"/>
    <property type="match status" value="1"/>
</dbReference>
<dbReference type="Gene3D" id="3.30.63.10">
    <property type="entry name" value="Guanylate Kinase phosphate binding domain"/>
    <property type="match status" value="1"/>
</dbReference>
<dbReference type="Gene3D" id="3.40.50.300">
    <property type="entry name" value="P-loop containing nucleotide triphosphate hydrolases"/>
    <property type="match status" value="1"/>
</dbReference>
<dbReference type="HAMAP" id="MF_00328">
    <property type="entry name" value="Guanylate_kinase"/>
    <property type="match status" value="1"/>
</dbReference>
<dbReference type="InterPro" id="IPR008145">
    <property type="entry name" value="GK/Ca_channel_bsu"/>
</dbReference>
<dbReference type="InterPro" id="IPR008144">
    <property type="entry name" value="Guanylate_kin-like_dom"/>
</dbReference>
<dbReference type="InterPro" id="IPR017665">
    <property type="entry name" value="Guanylate_kinase"/>
</dbReference>
<dbReference type="InterPro" id="IPR020590">
    <property type="entry name" value="Guanylate_kinase_CS"/>
</dbReference>
<dbReference type="InterPro" id="IPR027417">
    <property type="entry name" value="P-loop_NTPase"/>
</dbReference>
<dbReference type="NCBIfam" id="TIGR03263">
    <property type="entry name" value="guanyl_kin"/>
    <property type="match status" value="1"/>
</dbReference>
<dbReference type="PANTHER" id="PTHR23117:SF13">
    <property type="entry name" value="GUANYLATE KINASE"/>
    <property type="match status" value="1"/>
</dbReference>
<dbReference type="PANTHER" id="PTHR23117">
    <property type="entry name" value="GUANYLATE KINASE-RELATED"/>
    <property type="match status" value="1"/>
</dbReference>
<dbReference type="Pfam" id="PF00625">
    <property type="entry name" value="Guanylate_kin"/>
    <property type="match status" value="1"/>
</dbReference>
<dbReference type="SMART" id="SM00072">
    <property type="entry name" value="GuKc"/>
    <property type="match status" value="1"/>
</dbReference>
<dbReference type="SUPFAM" id="SSF52540">
    <property type="entry name" value="P-loop containing nucleoside triphosphate hydrolases"/>
    <property type="match status" value="1"/>
</dbReference>
<dbReference type="PROSITE" id="PS00856">
    <property type="entry name" value="GUANYLATE_KINASE_1"/>
    <property type="match status" value="1"/>
</dbReference>
<dbReference type="PROSITE" id="PS50052">
    <property type="entry name" value="GUANYLATE_KINASE_2"/>
    <property type="match status" value="1"/>
</dbReference>
<evidence type="ECO:0000255" key="1">
    <source>
        <dbReference type="HAMAP-Rule" id="MF_00328"/>
    </source>
</evidence>
<reference key="1">
    <citation type="journal article" date="2003" name="J. Bacteriol.">
        <title>Complete genome sequence of the ammonia-oxidizing bacterium and obligate chemolithoautotroph Nitrosomonas europaea.</title>
        <authorList>
            <person name="Chain P."/>
            <person name="Lamerdin J.E."/>
            <person name="Larimer F.W."/>
            <person name="Regala W."/>
            <person name="Lao V."/>
            <person name="Land M.L."/>
            <person name="Hauser L."/>
            <person name="Hooper A.B."/>
            <person name="Klotz M.G."/>
            <person name="Norton J."/>
            <person name="Sayavedra-Soto L.A."/>
            <person name="Arciero D.M."/>
            <person name="Hommes N.G."/>
            <person name="Whittaker M.M."/>
            <person name="Arp D.J."/>
        </authorList>
    </citation>
    <scope>NUCLEOTIDE SEQUENCE [LARGE SCALE GENOMIC DNA]</scope>
    <source>
        <strain>ATCC 19718 / CIP 103999 / KCTC 2705 / NBRC 14298</strain>
    </source>
</reference>
<organism>
    <name type="scientific">Nitrosomonas europaea (strain ATCC 19718 / CIP 103999 / KCTC 2705 / NBRC 14298)</name>
    <dbReference type="NCBI Taxonomy" id="228410"/>
    <lineage>
        <taxon>Bacteria</taxon>
        <taxon>Pseudomonadati</taxon>
        <taxon>Pseudomonadota</taxon>
        <taxon>Betaproteobacteria</taxon>
        <taxon>Nitrosomonadales</taxon>
        <taxon>Nitrosomonadaceae</taxon>
        <taxon>Nitrosomonas</taxon>
    </lineage>
</organism>
<accession>Q82SQ3</accession>
<protein>
    <recommendedName>
        <fullName evidence="1">Guanylate kinase</fullName>
        <ecNumber evidence="1">2.7.4.8</ecNumber>
    </recommendedName>
    <alternativeName>
        <fullName evidence="1">GMP kinase</fullName>
    </alternativeName>
</protein>
<keyword id="KW-0067">ATP-binding</keyword>
<keyword id="KW-0963">Cytoplasm</keyword>
<keyword id="KW-0418">Kinase</keyword>
<keyword id="KW-0547">Nucleotide-binding</keyword>
<keyword id="KW-1185">Reference proteome</keyword>
<keyword id="KW-0808">Transferase</keyword>
<proteinExistence type="inferred from homology"/>
<name>KGUA_NITEU</name>
<comment type="function">
    <text evidence="1">Essential for recycling GMP and indirectly, cGMP.</text>
</comment>
<comment type="catalytic activity">
    <reaction evidence="1">
        <text>GMP + ATP = GDP + ADP</text>
        <dbReference type="Rhea" id="RHEA:20780"/>
        <dbReference type="ChEBI" id="CHEBI:30616"/>
        <dbReference type="ChEBI" id="CHEBI:58115"/>
        <dbReference type="ChEBI" id="CHEBI:58189"/>
        <dbReference type="ChEBI" id="CHEBI:456216"/>
        <dbReference type="EC" id="2.7.4.8"/>
    </reaction>
</comment>
<comment type="subcellular location">
    <subcellularLocation>
        <location evidence="1">Cytoplasm</location>
    </subcellularLocation>
</comment>
<comment type="similarity">
    <text evidence="1">Belongs to the guanylate kinase family.</text>
</comment>